<organism>
    <name type="scientific">Paracidovorax citrulli (strain AAC00-1)</name>
    <name type="common">Acidovorax citrulli</name>
    <dbReference type="NCBI Taxonomy" id="397945"/>
    <lineage>
        <taxon>Bacteria</taxon>
        <taxon>Pseudomonadati</taxon>
        <taxon>Pseudomonadota</taxon>
        <taxon>Betaproteobacteria</taxon>
        <taxon>Burkholderiales</taxon>
        <taxon>Comamonadaceae</taxon>
        <taxon>Paracidovorax</taxon>
    </lineage>
</organism>
<feature type="chain" id="PRO_1000070209" description="Beta-ketoacyl-[acyl-carrier-protein] synthase III">
    <location>
        <begin position="1"/>
        <end position="325"/>
    </location>
</feature>
<feature type="region of interest" description="ACP-binding" evidence="1">
    <location>
        <begin position="253"/>
        <end position="257"/>
    </location>
</feature>
<feature type="active site" evidence="1">
    <location>
        <position position="119"/>
    </location>
</feature>
<feature type="active site" evidence="1">
    <location>
        <position position="252"/>
    </location>
</feature>
<feature type="active site" evidence="1">
    <location>
        <position position="282"/>
    </location>
</feature>
<comment type="function">
    <text evidence="1">Catalyzes the condensation reaction of fatty acid synthesis by the addition to an acyl acceptor of two carbons from malonyl-ACP. Catalyzes the first condensation reaction which initiates fatty acid synthesis and may therefore play a role in governing the total rate of fatty acid production. Possesses both acetoacetyl-ACP synthase and acetyl transacylase activities. Its substrate specificity determines the biosynthesis of branched-chain and/or straight-chain of fatty acids.</text>
</comment>
<comment type="catalytic activity">
    <reaction evidence="1">
        <text>malonyl-[ACP] + acetyl-CoA + H(+) = 3-oxobutanoyl-[ACP] + CO2 + CoA</text>
        <dbReference type="Rhea" id="RHEA:12080"/>
        <dbReference type="Rhea" id="RHEA-COMP:9623"/>
        <dbReference type="Rhea" id="RHEA-COMP:9625"/>
        <dbReference type="ChEBI" id="CHEBI:15378"/>
        <dbReference type="ChEBI" id="CHEBI:16526"/>
        <dbReference type="ChEBI" id="CHEBI:57287"/>
        <dbReference type="ChEBI" id="CHEBI:57288"/>
        <dbReference type="ChEBI" id="CHEBI:78449"/>
        <dbReference type="ChEBI" id="CHEBI:78450"/>
        <dbReference type="EC" id="2.3.1.180"/>
    </reaction>
</comment>
<comment type="pathway">
    <text evidence="1">Lipid metabolism; fatty acid biosynthesis.</text>
</comment>
<comment type="subunit">
    <text evidence="1">Homodimer.</text>
</comment>
<comment type="subcellular location">
    <subcellularLocation>
        <location evidence="1">Cytoplasm</location>
    </subcellularLocation>
</comment>
<comment type="domain">
    <text evidence="1">The last Arg residue of the ACP-binding site is essential for the weak association between ACP/AcpP and FabH.</text>
</comment>
<comment type="similarity">
    <text evidence="1">Belongs to the thiolase-like superfamily. FabH family.</text>
</comment>
<proteinExistence type="inferred from homology"/>
<reference key="1">
    <citation type="submission" date="2006-12" db="EMBL/GenBank/DDBJ databases">
        <title>Complete sequence of Acidovorax avenae subsp. citrulli AAC00-1.</title>
        <authorList>
            <person name="Copeland A."/>
            <person name="Lucas S."/>
            <person name="Lapidus A."/>
            <person name="Barry K."/>
            <person name="Detter J.C."/>
            <person name="Glavina del Rio T."/>
            <person name="Dalin E."/>
            <person name="Tice H."/>
            <person name="Pitluck S."/>
            <person name="Kiss H."/>
            <person name="Brettin T."/>
            <person name="Bruce D."/>
            <person name="Han C."/>
            <person name="Tapia R."/>
            <person name="Gilna P."/>
            <person name="Schmutz J."/>
            <person name="Larimer F."/>
            <person name="Land M."/>
            <person name="Hauser L."/>
            <person name="Kyrpides N."/>
            <person name="Kim E."/>
            <person name="Stahl D."/>
            <person name="Richardson P."/>
        </authorList>
    </citation>
    <scope>NUCLEOTIDE SEQUENCE [LARGE SCALE GENOMIC DNA]</scope>
    <source>
        <strain>AAC00-1</strain>
    </source>
</reference>
<evidence type="ECO:0000255" key="1">
    <source>
        <dbReference type="HAMAP-Rule" id="MF_01815"/>
    </source>
</evidence>
<keyword id="KW-0012">Acyltransferase</keyword>
<keyword id="KW-0963">Cytoplasm</keyword>
<keyword id="KW-0275">Fatty acid biosynthesis</keyword>
<keyword id="KW-0276">Fatty acid metabolism</keyword>
<keyword id="KW-0444">Lipid biosynthesis</keyword>
<keyword id="KW-0443">Lipid metabolism</keyword>
<keyword id="KW-0511">Multifunctional enzyme</keyword>
<keyword id="KW-0808">Transferase</keyword>
<name>FABH_PARC0</name>
<accession>A1TLD7</accession>
<sequence>MSRYSRITGTGSSLPPRRLTNADLVAELAGRGVETSDQWIVERTGIRARHFAERDVCSSDLGLEAARQALDAAGVQPADIDLIIVATSTPDMVFPSTACILQNKLGANGCPAFDVQAVCSGFIYALTVADSMIRSGAARRALVVGSEVFSRLLDFNDRTTCVLFGDGAGAVVLEASETPGILASDLHADGRHVGILCVPGNVYGGQILGDPLLKMDGQAVFKLAVGVLDKAARAVLDKAGLKESDVDWLIPHQANIRIMQGTAKKLGLPMDRVVVTVDQHGNTSAASIPLALDHAVRSGQARPGQNLLLEGVGGGFTWGAVLLTL</sequence>
<dbReference type="EC" id="2.3.1.180" evidence="1"/>
<dbReference type="EMBL" id="CP000512">
    <property type="protein sequence ID" value="ABM31775.1"/>
    <property type="molecule type" value="Genomic_DNA"/>
</dbReference>
<dbReference type="RefSeq" id="WP_011794328.1">
    <property type="nucleotide sequence ID" value="NC_008752.1"/>
</dbReference>
<dbReference type="SMR" id="A1TLD7"/>
<dbReference type="STRING" id="397945.Aave_1183"/>
<dbReference type="GeneID" id="79790843"/>
<dbReference type="KEGG" id="aav:Aave_1183"/>
<dbReference type="eggNOG" id="COG0332">
    <property type="taxonomic scope" value="Bacteria"/>
</dbReference>
<dbReference type="HOGENOM" id="CLU_039592_3_1_4"/>
<dbReference type="OrthoDB" id="9815506at2"/>
<dbReference type="UniPathway" id="UPA00094"/>
<dbReference type="Proteomes" id="UP000002596">
    <property type="component" value="Chromosome"/>
</dbReference>
<dbReference type="GO" id="GO:0005737">
    <property type="term" value="C:cytoplasm"/>
    <property type="evidence" value="ECO:0007669"/>
    <property type="project" value="UniProtKB-SubCell"/>
</dbReference>
<dbReference type="GO" id="GO:0004315">
    <property type="term" value="F:3-oxoacyl-[acyl-carrier-protein] synthase activity"/>
    <property type="evidence" value="ECO:0007669"/>
    <property type="project" value="InterPro"/>
</dbReference>
<dbReference type="GO" id="GO:0033818">
    <property type="term" value="F:beta-ketoacyl-acyl-carrier-protein synthase III activity"/>
    <property type="evidence" value="ECO:0007669"/>
    <property type="project" value="UniProtKB-UniRule"/>
</dbReference>
<dbReference type="GO" id="GO:0006633">
    <property type="term" value="P:fatty acid biosynthetic process"/>
    <property type="evidence" value="ECO:0007669"/>
    <property type="project" value="UniProtKB-UniRule"/>
</dbReference>
<dbReference type="GO" id="GO:0044550">
    <property type="term" value="P:secondary metabolite biosynthetic process"/>
    <property type="evidence" value="ECO:0007669"/>
    <property type="project" value="TreeGrafter"/>
</dbReference>
<dbReference type="CDD" id="cd00830">
    <property type="entry name" value="KAS_III"/>
    <property type="match status" value="1"/>
</dbReference>
<dbReference type="FunFam" id="3.40.47.10:FF:000004">
    <property type="entry name" value="3-oxoacyl-[acyl-carrier-protein] synthase 3"/>
    <property type="match status" value="1"/>
</dbReference>
<dbReference type="Gene3D" id="3.40.47.10">
    <property type="match status" value="1"/>
</dbReference>
<dbReference type="HAMAP" id="MF_01815">
    <property type="entry name" value="FabH"/>
    <property type="match status" value="1"/>
</dbReference>
<dbReference type="InterPro" id="IPR013747">
    <property type="entry name" value="ACP_syn_III_C"/>
</dbReference>
<dbReference type="InterPro" id="IPR013751">
    <property type="entry name" value="ACP_syn_III_N"/>
</dbReference>
<dbReference type="InterPro" id="IPR004655">
    <property type="entry name" value="FabH"/>
</dbReference>
<dbReference type="InterPro" id="IPR016039">
    <property type="entry name" value="Thiolase-like"/>
</dbReference>
<dbReference type="NCBIfam" id="TIGR00747">
    <property type="entry name" value="fabH"/>
    <property type="match status" value="1"/>
</dbReference>
<dbReference type="NCBIfam" id="NF006829">
    <property type="entry name" value="PRK09352.1"/>
    <property type="match status" value="1"/>
</dbReference>
<dbReference type="PANTHER" id="PTHR34069">
    <property type="entry name" value="3-OXOACYL-[ACYL-CARRIER-PROTEIN] SYNTHASE 3"/>
    <property type="match status" value="1"/>
</dbReference>
<dbReference type="PANTHER" id="PTHR34069:SF2">
    <property type="entry name" value="BETA-KETOACYL-[ACYL-CARRIER-PROTEIN] SYNTHASE III"/>
    <property type="match status" value="1"/>
</dbReference>
<dbReference type="Pfam" id="PF08545">
    <property type="entry name" value="ACP_syn_III"/>
    <property type="match status" value="1"/>
</dbReference>
<dbReference type="Pfam" id="PF08541">
    <property type="entry name" value="ACP_syn_III_C"/>
    <property type="match status" value="1"/>
</dbReference>
<dbReference type="SUPFAM" id="SSF53901">
    <property type="entry name" value="Thiolase-like"/>
    <property type="match status" value="1"/>
</dbReference>
<gene>
    <name evidence="1" type="primary">fabH</name>
    <name type="ordered locus">Aave_1183</name>
</gene>
<protein>
    <recommendedName>
        <fullName evidence="1">Beta-ketoacyl-[acyl-carrier-protein] synthase III</fullName>
        <shortName evidence="1">Beta-ketoacyl-ACP synthase III</shortName>
        <shortName evidence="1">KAS III</shortName>
        <ecNumber evidence="1">2.3.1.180</ecNumber>
    </recommendedName>
    <alternativeName>
        <fullName evidence="1">3-oxoacyl-[acyl-carrier-protein] synthase 3</fullName>
    </alternativeName>
    <alternativeName>
        <fullName evidence="1">3-oxoacyl-[acyl-carrier-protein] synthase III</fullName>
    </alternativeName>
</protein>